<keyword id="KW-0030">Aminoacyl-tRNA synthetase</keyword>
<keyword id="KW-0067">ATP-binding</keyword>
<keyword id="KW-0963">Cytoplasm</keyword>
<keyword id="KW-0436">Ligase</keyword>
<keyword id="KW-0479">Metal-binding</keyword>
<keyword id="KW-0547">Nucleotide-binding</keyword>
<keyword id="KW-0648">Protein biosynthesis</keyword>
<keyword id="KW-1185">Reference proteome</keyword>
<keyword id="KW-0862">Zinc</keyword>
<organism>
    <name type="scientific">Staphylococcus aureus (strain NCTC 8325 / PS 47)</name>
    <dbReference type="NCBI Taxonomy" id="93061"/>
    <lineage>
        <taxon>Bacteria</taxon>
        <taxon>Bacillati</taxon>
        <taxon>Bacillota</taxon>
        <taxon>Bacilli</taxon>
        <taxon>Bacillales</taxon>
        <taxon>Staphylococcaceae</taxon>
        <taxon>Staphylococcus</taxon>
    </lineage>
</organism>
<evidence type="ECO:0000255" key="1">
    <source>
        <dbReference type="HAMAP-Rule" id="MF_00041"/>
    </source>
</evidence>
<gene>
    <name evidence="1" type="primary">cysS</name>
    <name type="ordered locus">SAOUHSC_00511</name>
</gene>
<proteinExistence type="inferred from homology"/>
<name>SYC_STAA8</name>
<feature type="chain" id="PRO_1000071077" description="Cysteine--tRNA ligase">
    <location>
        <begin position="1"/>
        <end position="466"/>
    </location>
</feature>
<feature type="short sequence motif" description="'HIGH' region">
    <location>
        <begin position="30"/>
        <end position="40"/>
    </location>
</feature>
<feature type="short sequence motif" description="'KMSKS' region">
    <location>
        <begin position="265"/>
        <end position="269"/>
    </location>
</feature>
<feature type="binding site" evidence="1">
    <location>
        <position position="28"/>
    </location>
    <ligand>
        <name>Zn(2+)</name>
        <dbReference type="ChEBI" id="CHEBI:29105"/>
    </ligand>
</feature>
<feature type="binding site" evidence="1">
    <location>
        <position position="208"/>
    </location>
    <ligand>
        <name>Zn(2+)</name>
        <dbReference type="ChEBI" id="CHEBI:29105"/>
    </ligand>
</feature>
<feature type="binding site" evidence="1">
    <location>
        <position position="233"/>
    </location>
    <ligand>
        <name>Zn(2+)</name>
        <dbReference type="ChEBI" id="CHEBI:29105"/>
    </ligand>
</feature>
<feature type="binding site" evidence="1">
    <location>
        <position position="237"/>
    </location>
    <ligand>
        <name>Zn(2+)</name>
        <dbReference type="ChEBI" id="CHEBI:29105"/>
    </ligand>
</feature>
<feature type="binding site" evidence="1">
    <location>
        <position position="268"/>
    </location>
    <ligand>
        <name>ATP</name>
        <dbReference type="ChEBI" id="CHEBI:30616"/>
    </ligand>
</feature>
<sequence length="466" mass="53685">MITLYNTLTRQKEVFKPIEPGKVKMYVCGPTVYNYIHIGNARPAINYDVVRRYFEYQGYNVEYVSNFTDVDDKLIKRSQELNQSVPEIAEKYIAAFHEDVGALNVRKATSNPRVMDHMDDIIQFIKDLVDQGYAYESGGDVYFRTRKFEGYGKLSHQSIDDLKVGARIDAGEHKEDALDFTLWKKAKPGEISWDSPFGEGRPGWHIECSVMAFHELGPTIDIHAGGSDLQFPHHENEIAQSEAHNHAPFANYWMHNGFINIDNEKMSKSLGNFILVHDIIKEVDPDVLRFFMISVHYRSPINYNLELVESARSGLERIRNSYQLIEERAQIATNIENQQTYIDQIDAILNRFETVMNDDFNTANAITAWYDLAKLANKYVLENTTSTEVIDKFKAVYQIFSDVLGVPLKSKNADELLDEDVEKLIEERNEARKNKDFARADEIRDMLKSQNIILEDTPQGVRFKRG</sequence>
<reference key="1">
    <citation type="book" date="2006" name="Gram positive pathogens, 2nd edition">
        <title>The Staphylococcus aureus NCTC 8325 genome.</title>
        <editorList>
            <person name="Fischetti V."/>
            <person name="Novick R."/>
            <person name="Ferretti J."/>
            <person name="Portnoy D."/>
            <person name="Rood J."/>
        </editorList>
        <authorList>
            <person name="Gillaspy A.F."/>
            <person name="Worrell V."/>
            <person name="Orvis J."/>
            <person name="Roe B.A."/>
            <person name="Dyer D.W."/>
            <person name="Iandolo J.J."/>
        </authorList>
    </citation>
    <scope>NUCLEOTIDE SEQUENCE [LARGE SCALE GENOMIC DNA]</scope>
    <source>
        <strain>NCTC 8325 / PS 47</strain>
    </source>
</reference>
<dbReference type="EC" id="6.1.1.16" evidence="1"/>
<dbReference type="EMBL" id="CP000253">
    <property type="protein sequence ID" value="ABD29660.1"/>
    <property type="molecule type" value="Genomic_DNA"/>
</dbReference>
<dbReference type="RefSeq" id="WP_000631963.1">
    <property type="nucleotide sequence ID" value="NZ_LS483365.1"/>
</dbReference>
<dbReference type="RefSeq" id="YP_499084.1">
    <property type="nucleotide sequence ID" value="NC_007795.1"/>
</dbReference>
<dbReference type="SMR" id="Q2G2M6"/>
<dbReference type="STRING" id="93061.SAOUHSC_00511"/>
<dbReference type="PaxDb" id="1280-SAXN108_0583"/>
<dbReference type="GeneID" id="3920423"/>
<dbReference type="KEGG" id="sao:SAOUHSC_00511"/>
<dbReference type="PATRIC" id="fig|93061.5.peg.457"/>
<dbReference type="eggNOG" id="COG0215">
    <property type="taxonomic scope" value="Bacteria"/>
</dbReference>
<dbReference type="HOGENOM" id="CLU_013528_0_1_9"/>
<dbReference type="OrthoDB" id="9815130at2"/>
<dbReference type="PRO" id="PR:Q2G2M6"/>
<dbReference type="Proteomes" id="UP000008816">
    <property type="component" value="Chromosome"/>
</dbReference>
<dbReference type="GO" id="GO:0005737">
    <property type="term" value="C:cytoplasm"/>
    <property type="evidence" value="ECO:0000318"/>
    <property type="project" value="GO_Central"/>
</dbReference>
<dbReference type="GO" id="GO:0005829">
    <property type="term" value="C:cytosol"/>
    <property type="evidence" value="ECO:0000318"/>
    <property type="project" value="GO_Central"/>
</dbReference>
<dbReference type="GO" id="GO:0005524">
    <property type="term" value="F:ATP binding"/>
    <property type="evidence" value="ECO:0000318"/>
    <property type="project" value="GO_Central"/>
</dbReference>
<dbReference type="GO" id="GO:0004817">
    <property type="term" value="F:cysteine-tRNA ligase activity"/>
    <property type="evidence" value="ECO:0000318"/>
    <property type="project" value="GO_Central"/>
</dbReference>
<dbReference type="GO" id="GO:0008270">
    <property type="term" value="F:zinc ion binding"/>
    <property type="evidence" value="ECO:0007669"/>
    <property type="project" value="UniProtKB-UniRule"/>
</dbReference>
<dbReference type="GO" id="GO:0006423">
    <property type="term" value="P:cysteinyl-tRNA aminoacylation"/>
    <property type="evidence" value="ECO:0000318"/>
    <property type="project" value="GO_Central"/>
</dbReference>
<dbReference type="CDD" id="cd00672">
    <property type="entry name" value="CysRS_core"/>
    <property type="match status" value="1"/>
</dbReference>
<dbReference type="FunFam" id="1.20.120.1910:FF:000002">
    <property type="entry name" value="Cysteine--tRNA ligase"/>
    <property type="match status" value="1"/>
</dbReference>
<dbReference type="FunFam" id="3.40.50.620:FF:000009">
    <property type="entry name" value="Cysteine--tRNA ligase"/>
    <property type="match status" value="1"/>
</dbReference>
<dbReference type="Gene3D" id="1.20.120.1910">
    <property type="entry name" value="Cysteine-tRNA ligase, C-terminal anti-codon recognition domain"/>
    <property type="match status" value="1"/>
</dbReference>
<dbReference type="Gene3D" id="3.40.50.620">
    <property type="entry name" value="HUPs"/>
    <property type="match status" value="1"/>
</dbReference>
<dbReference type="HAMAP" id="MF_00041">
    <property type="entry name" value="Cys_tRNA_synth"/>
    <property type="match status" value="1"/>
</dbReference>
<dbReference type="InterPro" id="IPR015803">
    <property type="entry name" value="Cys-tRNA-ligase"/>
</dbReference>
<dbReference type="InterPro" id="IPR015273">
    <property type="entry name" value="Cys-tRNA-synt_Ia_DALR"/>
</dbReference>
<dbReference type="InterPro" id="IPR024909">
    <property type="entry name" value="Cys-tRNA/MSH_ligase"/>
</dbReference>
<dbReference type="InterPro" id="IPR056411">
    <property type="entry name" value="CysS_C"/>
</dbReference>
<dbReference type="InterPro" id="IPR014729">
    <property type="entry name" value="Rossmann-like_a/b/a_fold"/>
</dbReference>
<dbReference type="InterPro" id="IPR032678">
    <property type="entry name" value="tRNA-synt_1_cat_dom"/>
</dbReference>
<dbReference type="InterPro" id="IPR009080">
    <property type="entry name" value="tRNAsynth_Ia_anticodon-bd"/>
</dbReference>
<dbReference type="NCBIfam" id="TIGR00435">
    <property type="entry name" value="cysS"/>
    <property type="match status" value="1"/>
</dbReference>
<dbReference type="PANTHER" id="PTHR10890:SF3">
    <property type="entry name" value="CYSTEINE--TRNA LIGASE, CYTOPLASMIC"/>
    <property type="match status" value="1"/>
</dbReference>
<dbReference type="PANTHER" id="PTHR10890">
    <property type="entry name" value="CYSTEINYL-TRNA SYNTHETASE"/>
    <property type="match status" value="1"/>
</dbReference>
<dbReference type="Pfam" id="PF23493">
    <property type="entry name" value="CysS_C"/>
    <property type="match status" value="1"/>
</dbReference>
<dbReference type="Pfam" id="PF09190">
    <property type="entry name" value="DALR_2"/>
    <property type="match status" value="1"/>
</dbReference>
<dbReference type="Pfam" id="PF01406">
    <property type="entry name" value="tRNA-synt_1e"/>
    <property type="match status" value="1"/>
</dbReference>
<dbReference type="PRINTS" id="PR00983">
    <property type="entry name" value="TRNASYNTHCYS"/>
</dbReference>
<dbReference type="SMART" id="SM00840">
    <property type="entry name" value="DALR_2"/>
    <property type="match status" value="1"/>
</dbReference>
<dbReference type="SUPFAM" id="SSF47323">
    <property type="entry name" value="Anticodon-binding domain of a subclass of class I aminoacyl-tRNA synthetases"/>
    <property type="match status" value="1"/>
</dbReference>
<dbReference type="SUPFAM" id="SSF52374">
    <property type="entry name" value="Nucleotidylyl transferase"/>
    <property type="match status" value="1"/>
</dbReference>
<comment type="catalytic activity">
    <reaction evidence="1">
        <text>tRNA(Cys) + L-cysteine + ATP = L-cysteinyl-tRNA(Cys) + AMP + diphosphate</text>
        <dbReference type="Rhea" id="RHEA:17773"/>
        <dbReference type="Rhea" id="RHEA-COMP:9661"/>
        <dbReference type="Rhea" id="RHEA-COMP:9679"/>
        <dbReference type="ChEBI" id="CHEBI:30616"/>
        <dbReference type="ChEBI" id="CHEBI:33019"/>
        <dbReference type="ChEBI" id="CHEBI:35235"/>
        <dbReference type="ChEBI" id="CHEBI:78442"/>
        <dbReference type="ChEBI" id="CHEBI:78517"/>
        <dbReference type="ChEBI" id="CHEBI:456215"/>
        <dbReference type="EC" id="6.1.1.16"/>
    </reaction>
</comment>
<comment type="cofactor">
    <cofactor evidence="1">
        <name>Zn(2+)</name>
        <dbReference type="ChEBI" id="CHEBI:29105"/>
    </cofactor>
    <text evidence="1">Binds 1 zinc ion per subunit.</text>
</comment>
<comment type="subunit">
    <text evidence="1">Monomer.</text>
</comment>
<comment type="subcellular location">
    <subcellularLocation>
        <location evidence="1">Cytoplasm</location>
    </subcellularLocation>
</comment>
<comment type="similarity">
    <text evidence="1">Belongs to the class-I aminoacyl-tRNA synthetase family.</text>
</comment>
<protein>
    <recommendedName>
        <fullName evidence="1">Cysteine--tRNA ligase</fullName>
        <ecNumber evidence="1">6.1.1.16</ecNumber>
    </recommendedName>
    <alternativeName>
        <fullName evidence="1">Cysteinyl-tRNA synthetase</fullName>
        <shortName evidence="1">CysRS</shortName>
    </alternativeName>
</protein>
<accession>Q2G2M6</accession>